<evidence type="ECO:0000255" key="1">
    <source>
        <dbReference type="HAMAP-Rule" id="MF_00338"/>
    </source>
</evidence>
<feature type="chain" id="PRO_1000013037" description="UPF0145 protein Tery_3795">
    <location>
        <begin position="1"/>
        <end position="108"/>
    </location>
</feature>
<organism>
    <name type="scientific">Trichodesmium erythraeum (strain IMS101)</name>
    <dbReference type="NCBI Taxonomy" id="203124"/>
    <lineage>
        <taxon>Bacteria</taxon>
        <taxon>Bacillati</taxon>
        <taxon>Cyanobacteriota</taxon>
        <taxon>Cyanophyceae</taxon>
        <taxon>Oscillatoriophycideae</taxon>
        <taxon>Oscillatoriales</taxon>
        <taxon>Microcoleaceae</taxon>
        <taxon>Trichodesmium</taxon>
    </lineage>
</organism>
<proteinExistence type="inferred from homology"/>
<sequence length="108" mass="11547">MIITTTDVIQGSEVEEYLGIVTAEVVYGSNALRDFFAGIRDIIGGRTGSYEELFKQGQEEAIAELEKRARRMGANAVVGIEIDTGTINVDEKGALLLITAIGTAVKLA</sequence>
<protein>
    <recommendedName>
        <fullName evidence="1">UPF0145 protein Tery_3795</fullName>
    </recommendedName>
</protein>
<accession>Q10Y33</accession>
<reference key="1">
    <citation type="journal article" date="2015" name="Proc. Natl. Acad. Sci. U.S.A.">
        <title>Trichodesmium genome maintains abundant, widespread noncoding DNA in situ, despite oligotrophic lifestyle.</title>
        <authorList>
            <person name="Walworth N."/>
            <person name="Pfreundt U."/>
            <person name="Nelson W.C."/>
            <person name="Mincer T."/>
            <person name="Heidelberg J.F."/>
            <person name="Fu F."/>
            <person name="Waterbury J.B."/>
            <person name="Glavina del Rio T."/>
            <person name="Goodwin L."/>
            <person name="Kyrpides N.C."/>
            <person name="Land M.L."/>
            <person name="Woyke T."/>
            <person name="Hutchins D.A."/>
            <person name="Hess W.R."/>
            <person name="Webb E.A."/>
        </authorList>
    </citation>
    <scope>NUCLEOTIDE SEQUENCE [LARGE SCALE GENOMIC DNA]</scope>
    <source>
        <strain>IMS101</strain>
    </source>
</reference>
<dbReference type="EMBL" id="CP000393">
    <property type="protein sequence ID" value="ABG52841.1"/>
    <property type="molecule type" value="Genomic_DNA"/>
</dbReference>
<dbReference type="RefSeq" id="WP_011613171.1">
    <property type="nucleotide sequence ID" value="NC_008312.1"/>
</dbReference>
<dbReference type="SMR" id="Q10Y33"/>
<dbReference type="KEGG" id="ter:Tery_3795"/>
<dbReference type="eggNOG" id="COG0393">
    <property type="taxonomic scope" value="Bacteria"/>
</dbReference>
<dbReference type="HOGENOM" id="CLU_117144_3_2_3"/>
<dbReference type="OrthoDB" id="9796448at2"/>
<dbReference type="Gene3D" id="3.30.110.70">
    <property type="entry name" value="Hypothetical protein apc22750. Chain B"/>
    <property type="match status" value="1"/>
</dbReference>
<dbReference type="HAMAP" id="MF_00338">
    <property type="entry name" value="UPF0145"/>
    <property type="match status" value="1"/>
</dbReference>
<dbReference type="InterPro" id="IPR035439">
    <property type="entry name" value="UPF0145_dom_sf"/>
</dbReference>
<dbReference type="InterPro" id="IPR002765">
    <property type="entry name" value="UPF0145_YbjQ-like"/>
</dbReference>
<dbReference type="PANTHER" id="PTHR34068">
    <property type="entry name" value="UPF0145 PROTEIN YBJQ"/>
    <property type="match status" value="1"/>
</dbReference>
<dbReference type="PANTHER" id="PTHR34068:SF1">
    <property type="entry name" value="UPF0145 PROTEIN YBJQ"/>
    <property type="match status" value="1"/>
</dbReference>
<dbReference type="Pfam" id="PF01906">
    <property type="entry name" value="YbjQ_1"/>
    <property type="match status" value="1"/>
</dbReference>
<dbReference type="SUPFAM" id="SSF117782">
    <property type="entry name" value="YbjQ-like"/>
    <property type="match status" value="1"/>
</dbReference>
<comment type="similarity">
    <text evidence="1">Belongs to the UPF0145 family.</text>
</comment>
<name>Y3795_TRIEI</name>
<gene>
    <name type="ordered locus">Tery_3795</name>
</gene>